<comment type="function">
    <text evidence="1">Post-meiotically transcribed gene that has a role in late spermiogenesis; required for actin cone progression during spermatid individualization.</text>
</comment>
<comment type="similarity">
    <text evidence="2">Belongs to the male-specific scotti family.</text>
</comment>
<evidence type="ECO:0000250" key="1">
    <source>
        <dbReference type="UniProtKB" id="Q9VFK3"/>
    </source>
</evidence>
<evidence type="ECO:0000305" key="2"/>
<evidence type="ECO:0000312" key="3">
    <source>
        <dbReference type="EMBL" id="EDW15397.1"/>
    </source>
</evidence>
<name>SOTI_DROMO</name>
<dbReference type="EMBL" id="CH933806">
    <property type="protein sequence ID" value="EDW15397.1"/>
    <property type="molecule type" value="Genomic_DNA"/>
</dbReference>
<dbReference type="RefSeq" id="XP_001999936.1">
    <property type="nucleotide sequence ID" value="XM_001999900.1"/>
</dbReference>
<dbReference type="FunCoup" id="B4K843">
    <property type="interactions" value="2"/>
</dbReference>
<dbReference type="EnsemblMetazoa" id="FBtr0175533">
    <property type="protein sequence ID" value="FBpp0174025"/>
    <property type="gene ID" value="FBgn0147530"/>
</dbReference>
<dbReference type="EnsemblMetazoa" id="XM_002012490.4">
    <property type="protein sequence ID" value="XP_002012526.2"/>
    <property type="gene ID" value="LOC6586924"/>
</dbReference>
<dbReference type="KEGG" id="dmo:Dmoj_GI24808"/>
<dbReference type="eggNOG" id="ENOG502T96N">
    <property type="taxonomic scope" value="Eukaryota"/>
</dbReference>
<dbReference type="HOGENOM" id="CLU_120156_0_0_1"/>
<dbReference type="InParanoid" id="B4K843"/>
<dbReference type="OMA" id="LPQRWGQ"/>
<dbReference type="OrthoDB" id="7867455at2759"/>
<dbReference type="PhylomeDB" id="B4K843"/>
<dbReference type="Proteomes" id="UP000009192">
    <property type="component" value="Unassembled WGS sequence"/>
</dbReference>
<dbReference type="GO" id="GO:0007291">
    <property type="term" value="P:sperm individualization"/>
    <property type="evidence" value="ECO:0000250"/>
    <property type="project" value="UniProtKB"/>
</dbReference>
<dbReference type="InterPro" id="IPR031397">
    <property type="entry name" value="Soti"/>
</dbReference>
<dbReference type="Pfam" id="PF17079">
    <property type="entry name" value="SOTI"/>
    <property type="match status" value="1"/>
</dbReference>
<sequence length="152" mass="17556">MENRVADELIHLPLPEVQAVNVINVRHGDGDGDGENGWERHLDDEQMQAMRLENPQVAMLLDAPHEPPIELHHMLEPVNVPERPRKKRSFLTISKPFHVQPERCALISNGWRAVQCVQPEKRGECFANYLIKHMNSRNYPNGEGLPKRWGQY</sequence>
<accession>B4K843</accession>
<feature type="chain" id="PRO_0000379444" description="Male-specific protein scotti">
    <location>
        <begin position="1"/>
        <end position="152"/>
    </location>
</feature>
<proteinExistence type="inferred from homology"/>
<gene>
    <name evidence="1" type="primary">soti</name>
    <name type="ORF">GI24808</name>
</gene>
<keyword id="KW-0217">Developmental protein</keyword>
<keyword id="KW-0221">Differentiation</keyword>
<keyword id="KW-1185">Reference proteome</keyword>
<keyword id="KW-0744">Spermatogenesis</keyword>
<protein>
    <recommendedName>
        <fullName evidence="1">Male-specific protein scotti</fullName>
    </recommendedName>
</protein>
<reference evidence="3" key="1">
    <citation type="journal article" date="2007" name="Nature">
        <title>Evolution of genes and genomes on the Drosophila phylogeny.</title>
        <authorList>
            <consortium name="Drosophila 12 genomes consortium"/>
        </authorList>
    </citation>
    <scope>NUCLEOTIDE SEQUENCE [LARGE SCALE GENOMIC DNA]</scope>
    <source>
        <strain evidence="3">Tucson 15081-1352.22</strain>
    </source>
</reference>
<organism>
    <name type="scientific">Drosophila mojavensis</name>
    <name type="common">Fruit fly</name>
    <dbReference type="NCBI Taxonomy" id="7230"/>
    <lineage>
        <taxon>Eukaryota</taxon>
        <taxon>Metazoa</taxon>
        <taxon>Ecdysozoa</taxon>
        <taxon>Arthropoda</taxon>
        <taxon>Hexapoda</taxon>
        <taxon>Insecta</taxon>
        <taxon>Pterygota</taxon>
        <taxon>Neoptera</taxon>
        <taxon>Endopterygota</taxon>
        <taxon>Diptera</taxon>
        <taxon>Brachycera</taxon>
        <taxon>Muscomorpha</taxon>
        <taxon>Ephydroidea</taxon>
        <taxon>Drosophilidae</taxon>
        <taxon>Drosophila</taxon>
    </lineage>
</organism>